<sequence length="72" mass="8110">MLVITRKKGESLLIGDDIEITVVKLDDGSVKLAIDAPKKLTILRKELYNEVQEENKKATNFNPSILKNIKSK</sequence>
<keyword id="KW-1005">Bacterial flagellum biogenesis</keyword>
<keyword id="KW-0963">Cytoplasm</keyword>
<keyword id="KW-0678">Repressor</keyword>
<keyword id="KW-0694">RNA-binding</keyword>
<keyword id="KW-0810">Translation regulation</keyword>
<organism>
    <name type="scientific">Clostridium botulinum (strain 657 / Type Ba4)</name>
    <dbReference type="NCBI Taxonomy" id="515621"/>
    <lineage>
        <taxon>Bacteria</taxon>
        <taxon>Bacillati</taxon>
        <taxon>Bacillota</taxon>
        <taxon>Clostridia</taxon>
        <taxon>Eubacteriales</taxon>
        <taxon>Clostridiaceae</taxon>
        <taxon>Clostridium</taxon>
    </lineage>
</organism>
<evidence type="ECO:0000255" key="1">
    <source>
        <dbReference type="HAMAP-Rule" id="MF_00167"/>
    </source>
</evidence>
<reference key="1">
    <citation type="submission" date="2008-05" db="EMBL/GenBank/DDBJ databases">
        <title>Genome sequence of Clostridium botulinum Ba4 strain 657.</title>
        <authorList>
            <person name="Shrivastava S."/>
            <person name="Brown J.L."/>
            <person name="Bruce D."/>
            <person name="Detter C."/>
            <person name="Munk C."/>
            <person name="Smith L.A."/>
            <person name="Smith T.J."/>
            <person name="Sutton G."/>
            <person name="Brettin T.S."/>
        </authorList>
    </citation>
    <scope>NUCLEOTIDE SEQUENCE [LARGE SCALE GENOMIC DNA]</scope>
    <source>
        <strain>657 / Type Ba4</strain>
    </source>
</reference>
<proteinExistence type="inferred from homology"/>
<feature type="chain" id="PRO_1000203636" description="Translational regulator CsrA">
    <location>
        <begin position="1"/>
        <end position="72"/>
    </location>
</feature>
<comment type="function">
    <text evidence="1">A translational regulator that binds mRNA to regulate translation initiation and/or mRNA stability. Usually binds in the 5'-UTR at or near the Shine-Dalgarno sequence preventing ribosome-binding, thus repressing translation. Its main target seems to be the major flagellin gene, while its function is anatagonized by FliW.</text>
</comment>
<comment type="subunit">
    <text evidence="1">Homodimer; the beta-strands of each monomer intercalate to form a hydrophobic core, while the alpha-helices form wings that extend away from the core.</text>
</comment>
<comment type="subcellular location">
    <subcellularLocation>
        <location evidence="1">Cytoplasm</location>
    </subcellularLocation>
</comment>
<comment type="similarity">
    <text evidence="1">Belongs to the CsrA/RsmA family.</text>
</comment>
<protein>
    <recommendedName>
        <fullName evidence="1">Translational regulator CsrA</fullName>
    </recommendedName>
</protein>
<gene>
    <name evidence="1" type="primary">csrA</name>
    <name type="ordered locus">CLJ_B2964</name>
</gene>
<dbReference type="EMBL" id="CP001083">
    <property type="protein sequence ID" value="ACQ52430.1"/>
    <property type="molecule type" value="Genomic_DNA"/>
</dbReference>
<dbReference type="RefSeq" id="WP_003359193.1">
    <property type="nucleotide sequence ID" value="NC_012658.1"/>
</dbReference>
<dbReference type="SMR" id="C3L206"/>
<dbReference type="KEGG" id="cbi:CLJ_B2964"/>
<dbReference type="HOGENOM" id="CLU_164837_0_1_9"/>
<dbReference type="Proteomes" id="UP000002333">
    <property type="component" value="Chromosome"/>
</dbReference>
<dbReference type="GO" id="GO:0005829">
    <property type="term" value="C:cytosol"/>
    <property type="evidence" value="ECO:0007669"/>
    <property type="project" value="TreeGrafter"/>
</dbReference>
<dbReference type="GO" id="GO:0048027">
    <property type="term" value="F:mRNA 5'-UTR binding"/>
    <property type="evidence" value="ECO:0007669"/>
    <property type="project" value="UniProtKB-UniRule"/>
</dbReference>
<dbReference type="GO" id="GO:0044781">
    <property type="term" value="P:bacterial-type flagellum organization"/>
    <property type="evidence" value="ECO:0007669"/>
    <property type="project" value="UniProtKB-KW"/>
</dbReference>
<dbReference type="GO" id="GO:0006402">
    <property type="term" value="P:mRNA catabolic process"/>
    <property type="evidence" value="ECO:0007669"/>
    <property type="project" value="InterPro"/>
</dbReference>
<dbReference type="GO" id="GO:0045947">
    <property type="term" value="P:negative regulation of translational initiation"/>
    <property type="evidence" value="ECO:0007669"/>
    <property type="project" value="UniProtKB-UniRule"/>
</dbReference>
<dbReference type="GO" id="GO:1902208">
    <property type="term" value="P:regulation of bacterial-type flagellum assembly"/>
    <property type="evidence" value="ECO:0007669"/>
    <property type="project" value="UniProtKB-UniRule"/>
</dbReference>
<dbReference type="GO" id="GO:0006109">
    <property type="term" value="P:regulation of carbohydrate metabolic process"/>
    <property type="evidence" value="ECO:0007669"/>
    <property type="project" value="InterPro"/>
</dbReference>
<dbReference type="FunFam" id="2.60.40.4380:FF:000002">
    <property type="entry name" value="Translational regulator CsrA"/>
    <property type="match status" value="1"/>
</dbReference>
<dbReference type="Gene3D" id="2.60.40.4380">
    <property type="entry name" value="Translational regulator CsrA"/>
    <property type="match status" value="1"/>
</dbReference>
<dbReference type="HAMAP" id="MF_00167">
    <property type="entry name" value="CsrA"/>
    <property type="match status" value="1"/>
</dbReference>
<dbReference type="InterPro" id="IPR003751">
    <property type="entry name" value="CsrA"/>
</dbReference>
<dbReference type="InterPro" id="IPR036107">
    <property type="entry name" value="CsrA_sf"/>
</dbReference>
<dbReference type="NCBIfam" id="TIGR00202">
    <property type="entry name" value="csrA"/>
    <property type="match status" value="1"/>
</dbReference>
<dbReference type="NCBIfam" id="NF002469">
    <property type="entry name" value="PRK01712.1"/>
    <property type="match status" value="1"/>
</dbReference>
<dbReference type="PANTHER" id="PTHR34984">
    <property type="entry name" value="CARBON STORAGE REGULATOR"/>
    <property type="match status" value="1"/>
</dbReference>
<dbReference type="PANTHER" id="PTHR34984:SF1">
    <property type="entry name" value="CARBON STORAGE REGULATOR"/>
    <property type="match status" value="1"/>
</dbReference>
<dbReference type="Pfam" id="PF02599">
    <property type="entry name" value="CsrA"/>
    <property type="match status" value="1"/>
</dbReference>
<dbReference type="SUPFAM" id="SSF117130">
    <property type="entry name" value="CsrA-like"/>
    <property type="match status" value="1"/>
</dbReference>
<name>CSRA_CLOB6</name>
<accession>C3L206</accession>